<proteinExistence type="inferred from homology"/>
<dbReference type="EC" id="1.14.-.-" evidence="1"/>
<dbReference type="EMBL" id="CP000766">
    <property type="protein sequence ID" value="ABY72121.1"/>
    <property type="molecule type" value="Genomic_DNA"/>
</dbReference>
<dbReference type="RefSeq" id="WP_012150384.1">
    <property type="nucleotide sequence ID" value="NC_010263.3"/>
</dbReference>
<dbReference type="SMR" id="B0BW95"/>
<dbReference type="KEGG" id="rrj:RrIowa_0208"/>
<dbReference type="eggNOG" id="COG1054">
    <property type="taxonomic scope" value="Bacteria"/>
</dbReference>
<dbReference type="HOGENOM" id="CLU_038878_0_1_5"/>
<dbReference type="Proteomes" id="UP000000796">
    <property type="component" value="Chromosome"/>
</dbReference>
<dbReference type="GO" id="GO:0016705">
    <property type="term" value="F:oxidoreductase activity, acting on paired donors, with incorporation or reduction of molecular oxygen"/>
    <property type="evidence" value="ECO:0007669"/>
    <property type="project" value="UniProtKB-UniRule"/>
</dbReference>
<dbReference type="GO" id="GO:0006400">
    <property type="term" value="P:tRNA modification"/>
    <property type="evidence" value="ECO:0007669"/>
    <property type="project" value="UniProtKB-UniRule"/>
</dbReference>
<dbReference type="CDD" id="cd01518">
    <property type="entry name" value="RHOD_YceA"/>
    <property type="match status" value="1"/>
</dbReference>
<dbReference type="Gene3D" id="3.30.70.100">
    <property type="match status" value="1"/>
</dbReference>
<dbReference type="Gene3D" id="3.40.250.10">
    <property type="entry name" value="Rhodanese-like domain"/>
    <property type="match status" value="1"/>
</dbReference>
<dbReference type="HAMAP" id="MF_00469">
    <property type="entry name" value="TrhO"/>
    <property type="match status" value="1"/>
</dbReference>
<dbReference type="InterPro" id="IPR001763">
    <property type="entry name" value="Rhodanese-like_dom"/>
</dbReference>
<dbReference type="InterPro" id="IPR036873">
    <property type="entry name" value="Rhodanese-like_dom_sf"/>
</dbReference>
<dbReference type="InterPro" id="IPR020936">
    <property type="entry name" value="TrhO"/>
</dbReference>
<dbReference type="InterPro" id="IPR040503">
    <property type="entry name" value="TRHO_N"/>
</dbReference>
<dbReference type="NCBIfam" id="NF002397">
    <property type="entry name" value="PRK01415.1"/>
    <property type="match status" value="1"/>
</dbReference>
<dbReference type="PANTHER" id="PTHR43268:SF3">
    <property type="entry name" value="RHODANESE-LIKE DOMAIN-CONTAINING PROTEIN 7-RELATED"/>
    <property type="match status" value="1"/>
</dbReference>
<dbReference type="PANTHER" id="PTHR43268">
    <property type="entry name" value="THIOSULFATE SULFURTRANSFERASE/RHODANESE-LIKE DOMAIN-CONTAINING PROTEIN 2"/>
    <property type="match status" value="1"/>
</dbReference>
<dbReference type="Pfam" id="PF00581">
    <property type="entry name" value="Rhodanese"/>
    <property type="match status" value="1"/>
</dbReference>
<dbReference type="Pfam" id="PF17773">
    <property type="entry name" value="UPF0176_N"/>
    <property type="match status" value="1"/>
</dbReference>
<dbReference type="SMART" id="SM00450">
    <property type="entry name" value="RHOD"/>
    <property type="match status" value="1"/>
</dbReference>
<dbReference type="SUPFAM" id="SSF52821">
    <property type="entry name" value="Rhodanese/Cell cycle control phosphatase"/>
    <property type="match status" value="1"/>
</dbReference>
<dbReference type="PROSITE" id="PS50206">
    <property type="entry name" value="RHODANESE_3"/>
    <property type="match status" value="1"/>
</dbReference>
<feature type="chain" id="PRO_1000081193" description="tRNA uridine(34) hydroxylase">
    <location>
        <begin position="1"/>
        <end position="247"/>
    </location>
</feature>
<feature type="domain" description="Rhodanese" evidence="1">
    <location>
        <begin position="124"/>
        <end position="218"/>
    </location>
</feature>
<feature type="active site" description="Cysteine persulfide intermediate" evidence="1">
    <location>
        <position position="178"/>
    </location>
</feature>
<gene>
    <name evidence="1" type="primary">trhO</name>
    <name type="ordered locus">RrIowa_0208</name>
</gene>
<sequence length="247" mass="28394">MNEKIAILSAYSFVNIEEPANLIPKLLLLGKRKYIRGTILLANEGFNGSFSGSYENVNLVLEELIKLTGPKDVNVKINYSDVHPFQKLKVRLKKEIIAMNVDDLNVDLFKGEYIEPKDWDEFITKQDVIVIDTRNDYEVEVGTFKSAINPNTKTFKQFPAWVQQNQELLKGKKIAMVCTGGIRCEKSTSLLKSIGYNEVYHLKGGILQYLEDTQNKNNLWQGECFVFDDRRAVTDDLSPVERHWLQR</sequence>
<accession>B0BW95</accession>
<protein>
    <recommendedName>
        <fullName evidence="1">tRNA uridine(34) hydroxylase</fullName>
        <ecNumber evidence="1">1.14.-.-</ecNumber>
    </recommendedName>
    <alternativeName>
        <fullName evidence="1">tRNA hydroxylation protein O</fullName>
    </alternativeName>
</protein>
<organism>
    <name type="scientific">Rickettsia rickettsii (strain Iowa)</name>
    <dbReference type="NCBI Taxonomy" id="452659"/>
    <lineage>
        <taxon>Bacteria</taxon>
        <taxon>Pseudomonadati</taxon>
        <taxon>Pseudomonadota</taxon>
        <taxon>Alphaproteobacteria</taxon>
        <taxon>Rickettsiales</taxon>
        <taxon>Rickettsiaceae</taxon>
        <taxon>Rickettsieae</taxon>
        <taxon>Rickettsia</taxon>
        <taxon>spotted fever group</taxon>
    </lineage>
</organism>
<reference key="1">
    <citation type="journal article" date="2008" name="Infect. Immun.">
        <title>Genomic comparison of virulent Rickettsia rickettsii Sheila Smith and avirulent Rickettsia rickettsii Iowa.</title>
        <authorList>
            <person name="Ellison D.W."/>
            <person name="Clark T.R."/>
            <person name="Sturdevant D.E."/>
            <person name="Virtaneva K."/>
            <person name="Porcella S.F."/>
            <person name="Hackstadt T."/>
        </authorList>
    </citation>
    <scope>NUCLEOTIDE SEQUENCE [LARGE SCALE GENOMIC DNA]</scope>
    <source>
        <strain>Iowa</strain>
    </source>
</reference>
<comment type="function">
    <text evidence="1">Catalyzes oxygen-dependent 5-hydroxyuridine (ho5U) modification at position 34 in tRNAs.</text>
</comment>
<comment type="catalytic activity">
    <reaction evidence="1">
        <text>uridine(34) in tRNA + AH2 + O2 = 5-hydroxyuridine(34) in tRNA + A + H2O</text>
        <dbReference type="Rhea" id="RHEA:64224"/>
        <dbReference type="Rhea" id="RHEA-COMP:11727"/>
        <dbReference type="Rhea" id="RHEA-COMP:13381"/>
        <dbReference type="ChEBI" id="CHEBI:13193"/>
        <dbReference type="ChEBI" id="CHEBI:15377"/>
        <dbReference type="ChEBI" id="CHEBI:15379"/>
        <dbReference type="ChEBI" id="CHEBI:17499"/>
        <dbReference type="ChEBI" id="CHEBI:65315"/>
        <dbReference type="ChEBI" id="CHEBI:136877"/>
    </reaction>
</comment>
<comment type="similarity">
    <text evidence="1">Belongs to the TrhO family.</text>
</comment>
<name>TRHO_RICRO</name>
<keyword id="KW-0560">Oxidoreductase</keyword>
<keyword id="KW-0819">tRNA processing</keyword>
<evidence type="ECO:0000255" key="1">
    <source>
        <dbReference type="HAMAP-Rule" id="MF_00469"/>
    </source>
</evidence>